<feature type="chain" id="PRO_0000149216" description="DNA polymerase sliding clamp 2">
    <location>
        <begin position="1"/>
        <end position="245"/>
    </location>
</feature>
<feature type="mutagenesis site" description="Loss of interaction with PCNA3, no change with PCNA1." evidence="4">
    <original>LSDL</original>
    <variation>KLSK</variation>
    <location>
        <begin position="146"/>
        <end position="149"/>
    </location>
</feature>
<feature type="strand" evidence="12">
    <location>
        <begin position="1"/>
        <end position="6"/>
    </location>
</feature>
<feature type="helix" evidence="12">
    <location>
        <begin position="8"/>
        <end position="19"/>
    </location>
</feature>
<feature type="strand" evidence="12">
    <location>
        <begin position="23"/>
        <end position="30"/>
    </location>
</feature>
<feature type="strand" evidence="12">
    <location>
        <begin position="33"/>
        <end position="39"/>
    </location>
</feature>
<feature type="strand" evidence="12">
    <location>
        <begin position="43"/>
        <end position="52"/>
    </location>
</feature>
<feature type="helix" evidence="12">
    <location>
        <begin position="53"/>
        <end position="55"/>
    </location>
</feature>
<feature type="strand" evidence="12">
    <location>
        <begin position="56"/>
        <end position="64"/>
    </location>
</feature>
<feature type="strand" evidence="12">
    <location>
        <begin position="66"/>
        <end position="71"/>
    </location>
</feature>
<feature type="helix" evidence="12">
    <location>
        <begin position="72"/>
        <end position="79"/>
    </location>
</feature>
<feature type="strand" evidence="12">
    <location>
        <begin position="87"/>
        <end position="92"/>
    </location>
</feature>
<feature type="strand" evidence="12">
    <location>
        <begin position="94"/>
        <end position="112"/>
    </location>
</feature>
<feature type="strand" evidence="12">
    <location>
        <begin position="129"/>
        <end position="135"/>
    </location>
</feature>
<feature type="helix" evidence="12">
    <location>
        <begin position="136"/>
        <end position="146"/>
    </location>
</feature>
<feature type="turn" evidence="12">
    <location>
        <begin position="147"/>
        <end position="149"/>
    </location>
</feature>
<feature type="strand" evidence="12">
    <location>
        <begin position="151"/>
        <end position="158"/>
    </location>
</feature>
<feature type="strand" evidence="12">
    <location>
        <begin position="161"/>
        <end position="167"/>
    </location>
</feature>
<feature type="strand" evidence="12">
    <location>
        <begin position="172"/>
        <end position="177"/>
    </location>
</feature>
<feature type="strand" evidence="12">
    <location>
        <begin position="181"/>
        <end position="183"/>
    </location>
</feature>
<feature type="strand" evidence="12">
    <location>
        <begin position="185"/>
        <end position="189"/>
    </location>
</feature>
<feature type="strand" evidence="12">
    <location>
        <begin position="193"/>
        <end position="197"/>
    </location>
</feature>
<feature type="helix" evidence="12">
    <location>
        <begin position="198"/>
        <end position="203"/>
    </location>
</feature>
<feature type="helix" evidence="12">
    <location>
        <begin position="204"/>
        <end position="209"/>
    </location>
</feature>
<feature type="strand" evidence="12">
    <location>
        <begin position="212"/>
        <end position="218"/>
    </location>
</feature>
<feature type="strand" evidence="12">
    <location>
        <begin position="224"/>
        <end position="229"/>
    </location>
</feature>
<feature type="helix" evidence="11">
    <location>
        <begin position="231"/>
        <end position="233"/>
    </location>
</feature>
<feature type="strand" evidence="12">
    <location>
        <begin position="235"/>
        <end position="240"/>
    </location>
</feature>
<evidence type="ECO:0000255" key="1">
    <source>
        <dbReference type="HAMAP-Rule" id="MF_00317"/>
    </source>
</evidence>
<evidence type="ECO:0000269" key="2">
    <source>
    </source>
</evidence>
<evidence type="ECO:0000269" key="3">
    <source>
    </source>
</evidence>
<evidence type="ECO:0000269" key="4">
    <source>
    </source>
</evidence>
<evidence type="ECO:0000269" key="5">
    <source>
    </source>
</evidence>
<evidence type="ECO:0000269" key="6">
    <source>
    </source>
</evidence>
<evidence type="ECO:0000269" key="7">
    <source>
    </source>
</evidence>
<evidence type="ECO:0000269" key="8">
    <source>
    </source>
</evidence>
<evidence type="ECO:0000269" key="9">
    <source>
    </source>
</evidence>
<evidence type="ECO:0000305" key="10"/>
<evidence type="ECO:0007829" key="11">
    <source>
        <dbReference type="PDB" id="2IX2"/>
    </source>
</evidence>
<evidence type="ECO:0007829" key="12">
    <source>
        <dbReference type="PDB" id="3FDS"/>
    </source>
</evidence>
<protein>
    <recommendedName>
        <fullName evidence="1">DNA polymerase sliding clamp 2</fullName>
    </recommendedName>
    <alternativeName>
        <fullName evidence="1">Proliferating cell nuclear antigen homolog 2</fullName>
        <shortName evidence="1">PCNA2</shortName>
    </alternativeName>
</protein>
<proteinExistence type="evidence at protein level"/>
<keyword id="KW-0002">3D-structure</keyword>
<keyword id="KW-0235">DNA replication</keyword>
<keyword id="KW-0238">DNA-binding</keyword>
<keyword id="KW-1185">Reference proteome</keyword>
<dbReference type="EMBL" id="AE006641">
    <property type="protein sequence ID" value="AAK41309.1"/>
    <property type="status" value="ALT_INIT"/>
    <property type="molecule type" value="Genomic_DNA"/>
</dbReference>
<dbReference type="PIR" id="F90256">
    <property type="entry name" value="F90256"/>
</dbReference>
<dbReference type="RefSeq" id="WP_009989181.1">
    <property type="nucleotide sequence ID" value="NC_002754.1"/>
</dbReference>
<dbReference type="PDB" id="2HII">
    <property type="method" value="X-ray"/>
    <property type="resolution" value="2.79 A"/>
    <property type="chains" value="B/Y=1-245"/>
</dbReference>
<dbReference type="PDB" id="2HIK">
    <property type="method" value="X-ray"/>
    <property type="resolution" value="3.30 A"/>
    <property type="chains" value="B/M/Y=1-245"/>
</dbReference>
<dbReference type="PDB" id="2IO4">
    <property type="method" value="X-ray"/>
    <property type="resolution" value="2.60 A"/>
    <property type="chains" value="B/D=1-245"/>
</dbReference>
<dbReference type="PDB" id="2IX2">
    <property type="method" value="X-ray"/>
    <property type="resolution" value="2.20 A"/>
    <property type="chains" value="B=1-245"/>
</dbReference>
<dbReference type="PDB" id="2IZO">
    <property type="method" value="X-ray"/>
    <property type="resolution" value="2.90 A"/>
    <property type="chains" value="B=1-245"/>
</dbReference>
<dbReference type="PDB" id="2NTI">
    <property type="method" value="X-ray"/>
    <property type="resolution" value="2.50 A"/>
    <property type="chains" value="B/E/H=1-245"/>
</dbReference>
<dbReference type="PDB" id="3FDS">
    <property type="method" value="X-ray"/>
    <property type="resolution" value="2.05 A"/>
    <property type="chains" value="D=1-244"/>
</dbReference>
<dbReference type="PDB" id="7RPO">
    <property type="method" value="EM"/>
    <property type="resolution" value="4.16 A"/>
    <property type="chains" value="B=1-245"/>
</dbReference>
<dbReference type="PDB" id="7RPW">
    <property type="method" value="EM"/>
    <property type="resolution" value="4.38 A"/>
    <property type="chains" value="B=1-245"/>
</dbReference>
<dbReference type="PDB" id="7RPX">
    <property type="method" value="EM"/>
    <property type="resolution" value="4.20 A"/>
    <property type="chains" value="B=1-245"/>
</dbReference>
<dbReference type="PDBsum" id="2HII"/>
<dbReference type="PDBsum" id="2HIK"/>
<dbReference type="PDBsum" id="2IO4"/>
<dbReference type="PDBsum" id="2IX2"/>
<dbReference type="PDBsum" id="2IZO"/>
<dbReference type="PDBsum" id="2NTI"/>
<dbReference type="PDBsum" id="3FDS"/>
<dbReference type="PDBsum" id="7RPO"/>
<dbReference type="PDBsum" id="7RPW"/>
<dbReference type="PDBsum" id="7RPX"/>
<dbReference type="EMDB" id="EMD-24618"/>
<dbReference type="EMDB" id="EMD-24624"/>
<dbReference type="EMDB" id="EMD-24625"/>
<dbReference type="SMR" id="Q97Z84"/>
<dbReference type="FunCoup" id="Q97Z84">
    <property type="interactions" value="60"/>
</dbReference>
<dbReference type="STRING" id="273057.SSO1047"/>
<dbReference type="PaxDb" id="273057-SSO1047"/>
<dbReference type="EnsemblBacteria" id="AAK41309">
    <property type="protein sequence ID" value="AAK41309"/>
    <property type="gene ID" value="SSO1047"/>
</dbReference>
<dbReference type="GeneID" id="44129976"/>
<dbReference type="KEGG" id="sso:SSO1047"/>
<dbReference type="PATRIC" id="fig|273057.12.peg.1041"/>
<dbReference type="eggNOG" id="arCOG00488">
    <property type="taxonomic scope" value="Archaea"/>
</dbReference>
<dbReference type="HOGENOM" id="CLU_043978_1_1_2"/>
<dbReference type="InParanoid" id="Q97Z84"/>
<dbReference type="PhylomeDB" id="Q97Z84"/>
<dbReference type="EvolutionaryTrace" id="Q97Z84"/>
<dbReference type="Proteomes" id="UP000001974">
    <property type="component" value="Chromosome"/>
</dbReference>
<dbReference type="GO" id="GO:0003677">
    <property type="term" value="F:DNA binding"/>
    <property type="evidence" value="ECO:0007669"/>
    <property type="project" value="UniProtKB-UniRule"/>
</dbReference>
<dbReference type="GO" id="GO:0030337">
    <property type="term" value="F:DNA polymerase processivity factor activity"/>
    <property type="evidence" value="ECO:0000318"/>
    <property type="project" value="GO_Central"/>
</dbReference>
<dbReference type="GO" id="GO:0006272">
    <property type="term" value="P:leading strand elongation"/>
    <property type="evidence" value="ECO:0000318"/>
    <property type="project" value="GO_Central"/>
</dbReference>
<dbReference type="GO" id="GO:0006275">
    <property type="term" value="P:regulation of DNA replication"/>
    <property type="evidence" value="ECO:0007669"/>
    <property type="project" value="UniProtKB-UniRule"/>
</dbReference>
<dbReference type="CDD" id="cd00577">
    <property type="entry name" value="PCNA"/>
    <property type="match status" value="1"/>
</dbReference>
<dbReference type="FunFam" id="3.70.10.10:FF:000064">
    <property type="entry name" value="DNA polymerase sliding clamp 2"/>
    <property type="match status" value="1"/>
</dbReference>
<dbReference type="Gene3D" id="3.70.10.10">
    <property type="match status" value="1"/>
</dbReference>
<dbReference type="HAMAP" id="MF_00317">
    <property type="entry name" value="DNApol_clamp_arch"/>
    <property type="match status" value="1"/>
</dbReference>
<dbReference type="InterPro" id="IPR046938">
    <property type="entry name" value="DNA_clamp_sf"/>
</dbReference>
<dbReference type="InterPro" id="IPR000730">
    <property type="entry name" value="Pr_cel_nuc_antig"/>
</dbReference>
<dbReference type="InterPro" id="IPR022649">
    <property type="entry name" value="Pr_cel_nuc_antig_C"/>
</dbReference>
<dbReference type="InterPro" id="IPR022659">
    <property type="entry name" value="Pr_cel_nuc_antig_CS"/>
</dbReference>
<dbReference type="InterPro" id="IPR022648">
    <property type="entry name" value="Pr_cel_nuc_antig_N"/>
</dbReference>
<dbReference type="NCBIfam" id="NF002220">
    <property type="entry name" value="PRK01115.1-3"/>
    <property type="match status" value="1"/>
</dbReference>
<dbReference type="PANTHER" id="PTHR11352">
    <property type="entry name" value="PROLIFERATING CELL NUCLEAR ANTIGEN"/>
    <property type="match status" value="1"/>
</dbReference>
<dbReference type="PANTHER" id="PTHR11352:SF0">
    <property type="entry name" value="PROLIFERATING CELL NUCLEAR ANTIGEN"/>
    <property type="match status" value="1"/>
</dbReference>
<dbReference type="Pfam" id="PF02747">
    <property type="entry name" value="PCNA_C"/>
    <property type="match status" value="1"/>
</dbReference>
<dbReference type="Pfam" id="PF00705">
    <property type="entry name" value="PCNA_N"/>
    <property type="match status" value="1"/>
</dbReference>
<dbReference type="PRINTS" id="PR00339">
    <property type="entry name" value="PCNACYCLIN"/>
</dbReference>
<dbReference type="SUPFAM" id="SSF55979">
    <property type="entry name" value="DNA clamp"/>
    <property type="match status" value="2"/>
</dbReference>
<dbReference type="PROSITE" id="PS01251">
    <property type="entry name" value="PCNA_1"/>
    <property type="match status" value="1"/>
</dbReference>
<accession>Q97Z84</accession>
<organism>
    <name type="scientific">Saccharolobus solfataricus (strain ATCC 35092 / DSM 1617 / JCM 11322 / P2)</name>
    <name type="common">Sulfolobus solfataricus</name>
    <dbReference type="NCBI Taxonomy" id="273057"/>
    <lineage>
        <taxon>Archaea</taxon>
        <taxon>Thermoproteota</taxon>
        <taxon>Thermoprotei</taxon>
        <taxon>Sulfolobales</taxon>
        <taxon>Sulfolobaceae</taxon>
        <taxon>Saccharolobus</taxon>
    </lineage>
</organism>
<name>PCNA2_SACS2</name>
<gene>
    <name evidence="1" type="primary">pcn2</name>
    <name type="synonym">pcnA-2</name>
    <name type="ordered locus">SSO1047</name>
</gene>
<sequence length="245" mass="27436">MKAKVIDAVSFSYILRTVGDFLSEANFIVTKEGIRVSGIDPSRVVFLDIFLPSSYFEGFEVSQEKEIIGFKLEDVNDILKRVLKDDTLILSSNESKLTLTFDGEFTRSFELPLIQVESTQPPSVNLEFPFKAQLLTITFADIIDELSDLGEVLNIHSKENKLYFEVIGDLSTAKVELSTDNGTLLEASGADVSSSYGMEYVANTTKMRRASDSMELYFGSQIPLKLRFKLPQEGYGDFYIAPRAD</sequence>
<comment type="function">
    <text evidence="5">One of the sliding clamp subunits that acts as a moving platform for DNA processing. Responsible for tethering the catalytic subunit of DNA polymerase to DNA during high-speed replication. Heterotrimer stimulates the Holliday junction resolvase Hjc. DNA polymerase I, DNA ligase and the flap endonuclease may be constitutively associated with the PCNA heterotrimer forming a scanning complex able to couple DNA synthesis and Okazaki fragment maturation.</text>
</comment>
<comment type="subunit">
    <text evidence="2 3 4 5 6 7 8 9">Forms homodimers with PCNA1, which then recruit PCNA3; does not form homotrimers (PubMed:12535540, PubMed:18703842). The heterodimers interact with RfcS homotetramers (PubMed:12535540). Heterotrimer which circularizes head-to-tail (head is at N-terminus, tail is at C-terminus) to form a toroid; DNA passes through its center. Replication factor C (RFC) is required to load the toroid on the DNA. This subunit interacts with DNA polymerase I (dpo1) (PubMed:12535540). The heterotrimer also interacts with flap endonuclease 1, DNA ligase and XPF via the other subunits.</text>
</comment>
<comment type="similarity">
    <text evidence="1">Belongs to the PCNA family.</text>
</comment>
<comment type="sequence caution" evidence="10">
    <conflict type="erroneous initiation">
        <sequence resource="EMBL-CDS" id="AAK41309"/>
    </conflict>
    <text>Extended N-terminus.</text>
</comment>
<reference key="1">
    <citation type="journal article" date="2001" name="Proc. Natl. Acad. Sci. U.S.A.">
        <title>The complete genome of the crenarchaeon Sulfolobus solfataricus P2.</title>
        <authorList>
            <person name="She Q."/>
            <person name="Singh R.K."/>
            <person name="Confalonieri F."/>
            <person name="Zivanovic Y."/>
            <person name="Allard G."/>
            <person name="Awayez M.J."/>
            <person name="Chan-Weiher C.C.-Y."/>
            <person name="Clausen I.G."/>
            <person name="Curtis B.A."/>
            <person name="De Moors A."/>
            <person name="Erauso G."/>
            <person name="Fletcher C."/>
            <person name="Gordon P.M.K."/>
            <person name="Heikamp-de Jong I."/>
            <person name="Jeffries A.C."/>
            <person name="Kozera C.J."/>
            <person name="Medina N."/>
            <person name="Peng X."/>
            <person name="Thi-Ngoc H.P."/>
            <person name="Redder P."/>
            <person name="Schenk M.E."/>
            <person name="Theriault C."/>
            <person name="Tolstrup N."/>
            <person name="Charlebois R.L."/>
            <person name="Doolittle W.F."/>
            <person name="Duguet M."/>
            <person name="Gaasterland T."/>
            <person name="Garrett R.A."/>
            <person name="Ragan M.A."/>
            <person name="Sensen C.W."/>
            <person name="Van der Oost J."/>
        </authorList>
    </citation>
    <scope>NUCLEOTIDE SEQUENCE [LARGE SCALE GENOMIC DNA]</scope>
    <source>
        <strain>ATCC 35092 / DSM 1617 / JCM 11322 / P2</strain>
    </source>
</reference>
<reference key="2">
    <citation type="journal article" date="2003" name="Mol. Cell">
        <title>A heterotrimeric PCNA in the hyperthermophilic archaeon Sulfolobus solfataricus.</title>
        <authorList>
            <person name="Dionne I."/>
            <person name="Nookala R.K."/>
            <person name="Jackson S.P."/>
            <person name="Doherty A.J."/>
            <person name="Bell S.D."/>
        </authorList>
    </citation>
    <scope>INTERACTION WITH DPO1 AND PCNA1</scope>
    <scope>SUBUNIT</scope>
</reference>
<reference key="3">
    <citation type="journal article" date="2003" name="Mol. Microbiol.">
        <title>An archaeal XPF repair endonuclease dependent on a heterotrimeric PCNA.</title>
        <authorList>
            <person name="Roberts J.A."/>
            <person name="Bell S.D."/>
            <person name="White M.F."/>
        </authorList>
    </citation>
    <scope>SUBUNIT</scope>
    <source>
        <strain>ATCC 35092 / DSM 1617 / JCM 11322 / P2</strain>
    </source>
</reference>
<reference key="4">
    <citation type="journal article" date="2006" name="J. Mol. Biol.">
        <title>PCNA activates the Holliday junction endonuclease Hjc.</title>
        <authorList>
            <person name="Dorazi R."/>
            <person name="Parker J.L."/>
            <person name="White M.F."/>
        </authorList>
    </citation>
    <scope>FUNCTION</scope>
    <scope>SUBUNIT</scope>
</reference>
<reference key="5">
    <citation type="journal article" date="2006" name="Acta Crystallogr. F">
        <title>Structure of the heterotrimeric PCNA from Sulfolobus solfataricus.</title>
        <authorList>
            <person name="Williams G.J."/>
            <person name="Johnson K."/>
            <person name="Rudolf J."/>
            <person name="McMahon S.A."/>
            <person name="Carter L."/>
            <person name="Oke M."/>
            <person name="Liu H."/>
            <person name="Taylor G.L."/>
            <person name="White M.F."/>
            <person name="Naismith J.H."/>
        </authorList>
    </citation>
    <scope>X-RAY CRYSTALLOGRAPHY (2.20 ANGSTROMS)</scope>
    <scope>SUBUNIT</scope>
</reference>
<reference key="6">
    <citation type="journal article" date="2006" name="Mol. Cell">
        <title>A flexible interface between DNA ligase and PCNA supports conformational switching and efficient ligation of DNA.</title>
        <authorList>
            <person name="Pascal J.M."/>
            <person name="Tsodikov O.V."/>
            <person name="Hura G.L."/>
            <person name="Song W."/>
            <person name="Cotner E.A."/>
            <person name="Classen S."/>
            <person name="Tomkinson A.E."/>
            <person name="Tainer J.A."/>
            <person name="Ellenberger T."/>
        </authorList>
    </citation>
    <scope>X-RAY CRYSTALLOGRAPHY (2.79 ANGSTROMS)</scope>
    <scope>SUBUNIT</scope>
</reference>
<reference key="7">
    <citation type="journal article" date="2006" name="Nucleic Acids Res.">
        <title>Structure of an archaeal PCNA1-PCNA2-FEN1 complex: elucidating PCNA subunit and client enzyme specificity.</title>
        <authorList>
            <person name="Dore A.S."/>
            <person name="Kilkenny M.L."/>
            <person name="Jones S.A."/>
            <person name="Oliver A.W."/>
            <person name="Roe S.M."/>
            <person name="Bell S.D."/>
            <person name="Pearl L.H."/>
        </authorList>
    </citation>
    <scope>X-RAY CRYSTALLOGRAPHY (2.9 ANGSTROMS) IN COMPLEX WITH PCNA1 AND FEN</scope>
    <scope>SUBUNIT</scope>
    <scope>MUTAGENESIS OF 146-GLU--ASP-149</scope>
</reference>
<reference key="8">
    <citation type="journal article" date="2008" name="Acta Crystallogr. D">
        <title>Structures of monomeric, dimeric and trimeric PCNA: PCNA-ring assembly and opening.</title>
        <authorList>
            <person name="Hlinkova V."/>
            <person name="Xing G."/>
            <person name="Bauer J."/>
            <person name="Shin Y.J."/>
            <person name="Dionne I."/>
            <person name="Rajashankar K.R."/>
            <person name="Bell S.D."/>
            <person name="Ling H."/>
        </authorList>
    </citation>
    <scope>X-RAY CRYSTALLOGRAPHY (2.5 ANGSTROMS)</scope>
    <scope>SUBUNIT</scope>
</reference>
<reference key="9">
    <citation type="journal article" date="2009" name="Mol. Microbiol.">
        <title>Structural insight into recruitment of translesion DNA polymerase Dpo4 to sliding clamp PCNA.</title>
        <authorList>
            <person name="Xing G."/>
            <person name="Kirouac K."/>
            <person name="Shin Y.J."/>
            <person name="Bell S.D."/>
            <person name="Ling H."/>
        </authorList>
    </citation>
    <scope>X-RAY CRYSTALLOGRAPHY (2.05 ANGSTROMS) OF 1-244 IN COMPLEX WITH DPO4</scope>
    <scope>SUBUNIT</scope>
</reference>